<organism>
    <name type="scientific">Thiobacillus denitrificans (strain ATCC 25259 / T1)</name>
    <dbReference type="NCBI Taxonomy" id="292415"/>
    <lineage>
        <taxon>Bacteria</taxon>
        <taxon>Pseudomonadati</taxon>
        <taxon>Pseudomonadota</taxon>
        <taxon>Betaproteobacteria</taxon>
        <taxon>Nitrosomonadales</taxon>
        <taxon>Thiobacillaceae</taxon>
        <taxon>Thiobacillus</taxon>
    </lineage>
</organism>
<protein>
    <recommendedName>
        <fullName evidence="1">Crossover junction endodeoxyribonuclease RuvC</fullName>
        <ecNumber evidence="1">3.1.21.10</ecNumber>
    </recommendedName>
    <alternativeName>
        <fullName evidence="1">Holliday junction nuclease RuvC</fullName>
    </alternativeName>
    <alternativeName>
        <fullName evidence="1">Holliday junction resolvase RuvC</fullName>
    </alternativeName>
</protein>
<proteinExistence type="inferred from homology"/>
<gene>
    <name evidence="1" type="primary">ruvC</name>
    <name type="ordered locus">Tbd_2214</name>
</gene>
<keyword id="KW-0963">Cytoplasm</keyword>
<keyword id="KW-0227">DNA damage</keyword>
<keyword id="KW-0233">DNA recombination</keyword>
<keyword id="KW-0234">DNA repair</keyword>
<keyword id="KW-0238">DNA-binding</keyword>
<keyword id="KW-0255">Endonuclease</keyword>
<keyword id="KW-0378">Hydrolase</keyword>
<keyword id="KW-0460">Magnesium</keyword>
<keyword id="KW-0479">Metal-binding</keyword>
<keyword id="KW-0540">Nuclease</keyword>
<keyword id="KW-1185">Reference proteome</keyword>
<feature type="chain" id="PRO_0000225185" description="Crossover junction endodeoxyribonuclease RuvC">
    <location>
        <begin position="1"/>
        <end position="171"/>
    </location>
</feature>
<feature type="active site" evidence="1">
    <location>
        <position position="7"/>
    </location>
</feature>
<feature type="active site" evidence="1">
    <location>
        <position position="66"/>
    </location>
</feature>
<feature type="active site" evidence="1">
    <location>
        <position position="138"/>
    </location>
</feature>
<feature type="binding site" evidence="1">
    <location>
        <position position="7"/>
    </location>
    <ligand>
        <name>Mg(2+)</name>
        <dbReference type="ChEBI" id="CHEBI:18420"/>
        <label>1</label>
    </ligand>
</feature>
<feature type="binding site" evidence="1">
    <location>
        <position position="66"/>
    </location>
    <ligand>
        <name>Mg(2+)</name>
        <dbReference type="ChEBI" id="CHEBI:18420"/>
        <label>2</label>
    </ligand>
</feature>
<feature type="binding site" evidence="1">
    <location>
        <position position="138"/>
    </location>
    <ligand>
        <name>Mg(2+)</name>
        <dbReference type="ChEBI" id="CHEBI:18420"/>
        <label>1</label>
    </ligand>
</feature>
<dbReference type="EC" id="3.1.21.10" evidence="1"/>
<dbReference type="EMBL" id="CP000116">
    <property type="protein sequence ID" value="AAZ98167.1"/>
    <property type="molecule type" value="Genomic_DNA"/>
</dbReference>
<dbReference type="RefSeq" id="WP_011312726.1">
    <property type="nucleotide sequence ID" value="NC_007404.1"/>
</dbReference>
<dbReference type="SMR" id="Q3SGT0"/>
<dbReference type="STRING" id="292415.Tbd_2214"/>
<dbReference type="KEGG" id="tbd:Tbd_2214"/>
<dbReference type="eggNOG" id="COG0817">
    <property type="taxonomic scope" value="Bacteria"/>
</dbReference>
<dbReference type="HOGENOM" id="CLU_091257_2_0_4"/>
<dbReference type="OrthoDB" id="9805499at2"/>
<dbReference type="Proteomes" id="UP000008291">
    <property type="component" value="Chromosome"/>
</dbReference>
<dbReference type="GO" id="GO:0005737">
    <property type="term" value="C:cytoplasm"/>
    <property type="evidence" value="ECO:0007669"/>
    <property type="project" value="UniProtKB-SubCell"/>
</dbReference>
<dbReference type="GO" id="GO:0048476">
    <property type="term" value="C:Holliday junction resolvase complex"/>
    <property type="evidence" value="ECO:0007669"/>
    <property type="project" value="UniProtKB-UniRule"/>
</dbReference>
<dbReference type="GO" id="GO:0008821">
    <property type="term" value="F:crossover junction DNA endonuclease activity"/>
    <property type="evidence" value="ECO:0007669"/>
    <property type="project" value="UniProtKB-UniRule"/>
</dbReference>
<dbReference type="GO" id="GO:0003677">
    <property type="term" value="F:DNA binding"/>
    <property type="evidence" value="ECO:0007669"/>
    <property type="project" value="UniProtKB-KW"/>
</dbReference>
<dbReference type="GO" id="GO:0000287">
    <property type="term" value="F:magnesium ion binding"/>
    <property type="evidence" value="ECO:0007669"/>
    <property type="project" value="UniProtKB-UniRule"/>
</dbReference>
<dbReference type="GO" id="GO:0006310">
    <property type="term" value="P:DNA recombination"/>
    <property type="evidence" value="ECO:0007669"/>
    <property type="project" value="UniProtKB-UniRule"/>
</dbReference>
<dbReference type="GO" id="GO:0006281">
    <property type="term" value="P:DNA repair"/>
    <property type="evidence" value="ECO:0007669"/>
    <property type="project" value="UniProtKB-UniRule"/>
</dbReference>
<dbReference type="CDD" id="cd16962">
    <property type="entry name" value="RuvC"/>
    <property type="match status" value="1"/>
</dbReference>
<dbReference type="FunFam" id="3.30.420.10:FF:000002">
    <property type="entry name" value="Crossover junction endodeoxyribonuclease RuvC"/>
    <property type="match status" value="1"/>
</dbReference>
<dbReference type="Gene3D" id="3.30.420.10">
    <property type="entry name" value="Ribonuclease H-like superfamily/Ribonuclease H"/>
    <property type="match status" value="1"/>
</dbReference>
<dbReference type="HAMAP" id="MF_00034">
    <property type="entry name" value="RuvC"/>
    <property type="match status" value="1"/>
</dbReference>
<dbReference type="InterPro" id="IPR012337">
    <property type="entry name" value="RNaseH-like_sf"/>
</dbReference>
<dbReference type="InterPro" id="IPR036397">
    <property type="entry name" value="RNaseH_sf"/>
</dbReference>
<dbReference type="InterPro" id="IPR020563">
    <property type="entry name" value="X-over_junc_endoDNase_Mg_BS"/>
</dbReference>
<dbReference type="InterPro" id="IPR002176">
    <property type="entry name" value="X-over_junc_endoDNase_RuvC"/>
</dbReference>
<dbReference type="NCBIfam" id="TIGR00228">
    <property type="entry name" value="ruvC"/>
    <property type="match status" value="1"/>
</dbReference>
<dbReference type="PANTHER" id="PTHR30194">
    <property type="entry name" value="CROSSOVER JUNCTION ENDODEOXYRIBONUCLEASE RUVC"/>
    <property type="match status" value="1"/>
</dbReference>
<dbReference type="PANTHER" id="PTHR30194:SF3">
    <property type="entry name" value="CROSSOVER JUNCTION ENDODEOXYRIBONUCLEASE RUVC"/>
    <property type="match status" value="1"/>
</dbReference>
<dbReference type="Pfam" id="PF02075">
    <property type="entry name" value="RuvC"/>
    <property type="match status" value="1"/>
</dbReference>
<dbReference type="PRINTS" id="PR00696">
    <property type="entry name" value="RSOLVASERUVC"/>
</dbReference>
<dbReference type="SUPFAM" id="SSF53098">
    <property type="entry name" value="Ribonuclease H-like"/>
    <property type="match status" value="1"/>
</dbReference>
<dbReference type="PROSITE" id="PS01321">
    <property type="entry name" value="RUVC"/>
    <property type="match status" value="1"/>
</dbReference>
<name>RUVC_THIDA</name>
<accession>Q3SGT0</accession>
<reference key="1">
    <citation type="journal article" date="2006" name="J. Bacteriol.">
        <title>The genome sequence of the obligately chemolithoautotrophic, facultatively anaerobic bacterium Thiobacillus denitrificans.</title>
        <authorList>
            <person name="Beller H.R."/>
            <person name="Chain P.S."/>
            <person name="Letain T.E."/>
            <person name="Chakicherla A."/>
            <person name="Larimer F.W."/>
            <person name="Richardson P.M."/>
            <person name="Coleman M.A."/>
            <person name="Wood A.P."/>
            <person name="Kelly D.P."/>
        </authorList>
    </citation>
    <scope>NUCLEOTIDE SEQUENCE [LARGE SCALE GENOMIC DNA]</scope>
    <source>
        <strain>ATCC 25259 / T1</strain>
    </source>
</reference>
<sequence length="171" mass="17647">MRILGIDPGLRLTGFGLIEQTGQKLAYVASGVVKSGEGSLPARLGILFGGINEVIATYRPDTCAVEIVFVNVNPQSTLLLGQARGAAICAAVSNDLTVAEYTALQIKQAVVGHGKAAKTQVQEMVKRLLALPIAPTADAADALACAITHAHGSRLGAQSTAGYRLKGGRLV</sequence>
<comment type="function">
    <text evidence="1">The RuvA-RuvB-RuvC complex processes Holliday junction (HJ) DNA during genetic recombination and DNA repair. Endonuclease that resolves HJ intermediates. Cleaves cruciform DNA by making single-stranded nicks across the HJ at symmetrical positions within the homologous arms, yielding a 5'-phosphate and a 3'-hydroxyl group; requires a central core of homology in the junction. The consensus cleavage sequence is 5'-(A/T)TT(C/G)-3'. Cleavage occurs on the 3'-side of the TT dinucleotide at the point of strand exchange. HJ branch migration catalyzed by RuvA-RuvB allows RuvC to scan DNA until it finds its consensus sequence, where it cleaves and resolves the cruciform DNA.</text>
</comment>
<comment type="catalytic activity">
    <reaction evidence="1">
        <text>Endonucleolytic cleavage at a junction such as a reciprocal single-stranded crossover between two homologous DNA duplexes (Holliday junction).</text>
        <dbReference type="EC" id="3.1.21.10"/>
    </reaction>
</comment>
<comment type="cofactor">
    <cofactor evidence="1">
        <name>Mg(2+)</name>
        <dbReference type="ChEBI" id="CHEBI:18420"/>
    </cofactor>
    <text evidence="1">Binds 2 Mg(2+) ion per subunit.</text>
</comment>
<comment type="subunit">
    <text evidence="1">Homodimer which binds Holliday junction (HJ) DNA. The HJ becomes 2-fold symmetrical on binding to RuvC with unstacked arms; it has a different conformation from HJ DNA in complex with RuvA. In the full resolvosome a probable DNA-RuvA(4)-RuvB(12)-RuvC(2) complex forms which resolves the HJ.</text>
</comment>
<comment type="subcellular location">
    <subcellularLocation>
        <location evidence="1">Cytoplasm</location>
    </subcellularLocation>
</comment>
<comment type="similarity">
    <text evidence="1">Belongs to the RuvC family.</text>
</comment>
<evidence type="ECO:0000255" key="1">
    <source>
        <dbReference type="HAMAP-Rule" id="MF_00034"/>
    </source>
</evidence>